<sequence length="315" mass="35868">MASFASLVKKELTQLEVHPEHAKAELSALIRMNGSLTLMAHRFVLNIQTENPAIARRIYSLIRQVYHHEANLVVHRKMKLKKNYQYIVRLTEGVNDILSDLSILDPDTMAISTTVPTSVLKEPQRMRSYLRGAFLASGSVNNPETSRYHLEIYSLYDNHNAGILKMMNHFHLNARTVERRSGYIVYLKEAEKIADFLQVIGATNAMLKFEDVRIMRDMRNSVNRLVNCENANMNKTIDAAQKQIENINYLKNHVGLDNLPAKLREIAVLRLAHPDVSLQELGAMMPSGQISKSGVNHRLRKLNQIAEGYQQPEDA</sequence>
<gene>
    <name evidence="1" type="primary">whiA</name>
    <name type="ordered locus">LCABL_10750</name>
</gene>
<name>WHIA_LACCB</name>
<dbReference type="EMBL" id="FM177140">
    <property type="protein sequence ID" value="CAQ66161.1"/>
    <property type="molecule type" value="Genomic_DNA"/>
</dbReference>
<dbReference type="SMR" id="B3WCR0"/>
<dbReference type="KEGG" id="lcb:LCABL_10750"/>
<dbReference type="HOGENOM" id="CLU_053282_1_0_9"/>
<dbReference type="GO" id="GO:0003677">
    <property type="term" value="F:DNA binding"/>
    <property type="evidence" value="ECO:0007669"/>
    <property type="project" value="UniProtKB-UniRule"/>
</dbReference>
<dbReference type="GO" id="GO:0051301">
    <property type="term" value="P:cell division"/>
    <property type="evidence" value="ECO:0007669"/>
    <property type="project" value="UniProtKB-UniRule"/>
</dbReference>
<dbReference type="GO" id="GO:0043937">
    <property type="term" value="P:regulation of sporulation"/>
    <property type="evidence" value="ECO:0007669"/>
    <property type="project" value="InterPro"/>
</dbReference>
<dbReference type="Gene3D" id="3.10.28.10">
    <property type="entry name" value="Homing endonucleases"/>
    <property type="match status" value="1"/>
</dbReference>
<dbReference type="HAMAP" id="MF_01420">
    <property type="entry name" value="HTH_type_WhiA"/>
    <property type="match status" value="1"/>
</dbReference>
<dbReference type="InterPro" id="IPR027434">
    <property type="entry name" value="Homing_endonucl"/>
</dbReference>
<dbReference type="InterPro" id="IPR018478">
    <property type="entry name" value="Sporu_reg_WhiA_N_dom"/>
</dbReference>
<dbReference type="InterPro" id="IPR003802">
    <property type="entry name" value="Sporulation_regulator_WhiA"/>
</dbReference>
<dbReference type="InterPro" id="IPR023054">
    <property type="entry name" value="Sporulation_regulator_WhiA_C"/>
</dbReference>
<dbReference type="InterPro" id="IPR039518">
    <property type="entry name" value="WhiA_LAGLIDADG_dom"/>
</dbReference>
<dbReference type="NCBIfam" id="TIGR00647">
    <property type="entry name" value="DNA_bind_WhiA"/>
    <property type="match status" value="1"/>
</dbReference>
<dbReference type="PANTHER" id="PTHR37307">
    <property type="entry name" value="CELL DIVISION PROTEIN WHIA-RELATED"/>
    <property type="match status" value="1"/>
</dbReference>
<dbReference type="PANTHER" id="PTHR37307:SF1">
    <property type="entry name" value="CELL DIVISION PROTEIN WHIA-RELATED"/>
    <property type="match status" value="1"/>
</dbReference>
<dbReference type="Pfam" id="PF02650">
    <property type="entry name" value="HTH_WhiA"/>
    <property type="match status" value="1"/>
</dbReference>
<dbReference type="Pfam" id="PF14527">
    <property type="entry name" value="LAGLIDADG_WhiA"/>
    <property type="match status" value="1"/>
</dbReference>
<dbReference type="Pfam" id="PF10298">
    <property type="entry name" value="WhiA_N"/>
    <property type="match status" value="1"/>
</dbReference>
<dbReference type="SUPFAM" id="SSF55608">
    <property type="entry name" value="Homing endonucleases"/>
    <property type="match status" value="1"/>
</dbReference>
<feature type="chain" id="PRO_0000376496" description="Probable cell division protein WhiA">
    <location>
        <begin position="1"/>
        <end position="315"/>
    </location>
</feature>
<feature type="DNA-binding region" description="H-T-H motif" evidence="1">
    <location>
        <begin position="277"/>
        <end position="311"/>
    </location>
</feature>
<accession>B3WCR0</accession>
<proteinExistence type="inferred from homology"/>
<keyword id="KW-0131">Cell cycle</keyword>
<keyword id="KW-0132">Cell division</keyword>
<keyword id="KW-0238">DNA-binding</keyword>
<evidence type="ECO:0000255" key="1">
    <source>
        <dbReference type="HAMAP-Rule" id="MF_01420"/>
    </source>
</evidence>
<organism>
    <name type="scientific">Lacticaseibacillus casei (strain BL23)</name>
    <name type="common">Lactobacillus casei</name>
    <dbReference type="NCBI Taxonomy" id="543734"/>
    <lineage>
        <taxon>Bacteria</taxon>
        <taxon>Bacillati</taxon>
        <taxon>Bacillota</taxon>
        <taxon>Bacilli</taxon>
        <taxon>Lactobacillales</taxon>
        <taxon>Lactobacillaceae</taxon>
        <taxon>Lacticaseibacillus</taxon>
    </lineage>
</organism>
<comment type="function">
    <text evidence="1">Involved in cell division and chromosome segregation.</text>
</comment>
<comment type="similarity">
    <text evidence="1">Belongs to the WhiA family.</text>
</comment>
<reference key="1">
    <citation type="submission" date="2008-06" db="EMBL/GenBank/DDBJ databases">
        <title>Lactobacillus casei BL23 complete genome sequence.</title>
        <authorList>
            <person name="Maze A."/>
            <person name="Boel G."/>
            <person name="Bourand A."/>
            <person name="Loux V."/>
            <person name="Gibrat J.F."/>
            <person name="Zuniga M."/>
            <person name="Hartke A."/>
            <person name="Deutscher J."/>
        </authorList>
    </citation>
    <scope>NUCLEOTIDE SEQUENCE [LARGE SCALE GENOMIC DNA]</scope>
    <source>
        <strain>BL23</strain>
    </source>
</reference>
<protein>
    <recommendedName>
        <fullName evidence="1">Probable cell division protein WhiA</fullName>
    </recommendedName>
</protein>